<dbReference type="EC" id="5.1.1.1" evidence="1"/>
<dbReference type="EMBL" id="AP009247">
    <property type="protein sequence ID" value="BAF61726.1"/>
    <property type="molecule type" value="Genomic_DNA"/>
</dbReference>
<dbReference type="SMR" id="A5CWE3"/>
<dbReference type="STRING" id="412965.COSY_0613"/>
<dbReference type="KEGG" id="vok:COSY_0613"/>
<dbReference type="eggNOG" id="COG0787">
    <property type="taxonomic scope" value="Bacteria"/>
</dbReference>
<dbReference type="HOGENOM" id="CLU_028393_1_0_6"/>
<dbReference type="OrthoDB" id="9813814at2"/>
<dbReference type="UniPathway" id="UPA00042">
    <property type="reaction ID" value="UER00497"/>
</dbReference>
<dbReference type="Proteomes" id="UP000000247">
    <property type="component" value="Chromosome"/>
</dbReference>
<dbReference type="GO" id="GO:0005829">
    <property type="term" value="C:cytosol"/>
    <property type="evidence" value="ECO:0007669"/>
    <property type="project" value="TreeGrafter"/>
</dbReference>
<dbReference type="GO" id="GO:0008784">
    <property type="term" value="F:alanine racemase activity"/>
    <property type="evidence" value="ECO:0007669"/>
    <property type="project" value="UniProtKB-UniRule"/>
</dbReference>
<dbReference type="GO" id="GO:0030170">
    <property type="term" value="F:pyridoxal phosphate binding"/>
    <property type="evidence" value="ECO:0007669"/>
    <property type="project" value="UniProtKB-UniRule"/>
</dbReference>
<dbReference type="GO" id="GO:0030632">
    <property type="term" value="P:D-alanine biosynthetic process"/>
    <property type="evidence" value="ECO:0007669"/>
    <property type="project" value="UniProtKB-UniRule"/>
</dbReference>
<dbReference type="CDD" id="cd06827">
    <property type="entry name" value="PLPDE_III_AR_proteobact"/>
    <property type="match status" value="1"/>
</dbReference>
<dbReference type="FunFam" id="3.20.20.10:FF:000002">
    <property type="entry name" value="Alanine racemase"/>
    <property type="match status" value="1"/>
</dbReference>
<dbReference type="Gene3D" id="3.20.20.10">
    <property type="entry name" value="Alanine racemase"/>
    <property type="match status" value="1"/>
</dbReference>
<dbReference type="Gene3D" id="2.40.37.10">
    <property type="entry name" value="Lyase, Ornithine Decarboxylase, Chain A, domain 1"/>
    <property type="match status" value="1"/>
</dbReference>
<dbReference type="HAMAP" id="MF_01201">
    <property type="entry name" value="Ala_racemase"/>
    <property type="match status" value="1"/>
</dbReference>
<dbReference type="InterPro" id="IPR000821">
    <property type="entry name" value="Ala_racemase"/>
</dbReference>
<dbReference type="InterPro" id="IPR009006">
    <property type="entry name" value="Ala_racemase/Decarboxylase_C"/>
</dbReference>
<dbReference type="InterPro" id="IPR011079">
    <property type="entry name" value="Ala_racemase_C"/>
</dbReference>
<dbReference type="InterPro" id="IPR001608">
    <property type="entry name" value="Ala_racemase_N"/>
</dbReference>
<dbReference type="InterPro" id="IPR029066">
    <property type="entry name" value="PLP-binding_barrel"/>
</dbReference>
<dbReference type="NCBIfam" id="TIGR00492">
    <property type="entry name" value="alr"/>
    <property type="match status" value="1"/>
</dbReference>
<dbReference type="PANTHER" id="PTHR30511">
    <property type="entry name" value="ALANINE RACEMASE"/>
    <property type="match status" value="1"/>
</dbReference>
<dbReference type="PANTHER" id="PTHR30511:SF4">
    <property type="entry name" value="ALANINE RACEMASE, BIOSYNTHETIC"/>
    <property type="match status" value="1"/>
</dbReference>
<dbReference type="Pfam" id="PF00842">
    <property type="entry name" value="Ala_racemase_C"/>
    <property type="match status" value="1"/>
</dbReference>
<dbReference type="Pfam" id="PF01168">
    <property type="entry name" value="Ala_racemase_N"/>
    <property type="match status" value="1"/>
</dbReference>
<dbReference type="PRINTS" id="PR00992">
    <property type="entry name" value="ALARACEMASE"/>
</dbReference>
<dbReference type="SMART" id="SM01005">
    <property type="entry name" value="Ala_racemase_C"/>
    <property type="match status" value="1"/>
</dbReference>
<dbReference type="SUPFAM" id="SSF50621">
    <property type="entry name" value="Alanine racemase C-terminal domain-like"/>
    <property type="match status" value="1"/>
</dbReference>
<dbReference type="SUPFAM" id="SSF51419">
    <property type="entry name" value="PLP-binding barrel"/>
    <property type="match status" value="1"/>
</dbReference>
<protein>
    <recommendedName>
        <fullName evidence="1">Alanine racemase</fullName>
        <ecNumber evidence="1">5.1.1.1</ecNumber>
    </recommendedName>
</protein>
<comment type="function">
    <text evidence="1">Catalyzes the interconversion of L-alanine and D-alanine. May also act on other amino acids.</text>
</comment>
<comment type="catalytic activity">
    <reaction evidence="1">
        <text>L-alanine = D-alanine</text>
        <dbReference type="Rhea" id="RHEA:20249"/>
        <dbReference type="ChEBI" id="CHEBI:57416"/>
        <dbReference type="ChEBI" id="CHEBI:57972"/>
        <dbReference type="EC" id="5.1.1.1"/>
    </reaction>
</comment>
<comment type="cofactor">
    <cofactor evidence="1">
        <name>pyridoxal 5'-phosphate</name>
        <dbReference type="ChEBI" id="CHEBI:597326"/>
    </cofactor>
</comment>
<comment type="pathway">
    <text evidence="1">Amino-acid biosynthesis; D-alanine biosynthesis; D-alanine from L-alanine: step 1/1.</text>
</comment>
<comment type="similarity">
    <text evidence="1">Belongs to the alanine racemase family.</text>
</comment>
<reference key="1">
    <citation type="journal article" date="2007" name="Curr. Biol.">
        <title>Reduced genome of the thioautotrophic intracellular symbiont in a deep-sea clam, Calyptogena okutanii.</title>
        <authorList>
            <person name="Kuwahara H."/>
            <person name="Yoshida T."/>
            <person name="Takaki Y."/>
            <person name="Shimamura S."/>
            <person name="Nishi S."/>
            <person name="Harada M."/>
            <person name="Matsuyama K."/>
            <person name="Takishita K."/>
            <person name="Kawato M."/>
            <person name="Uematsu K."/>
            <person name="Fujiwara Y."/>
            <person name="Sato T."/>
            <person name="Kato C."/>
            <person name="Kitagawa M."/>
            <person name="Kato I."/>
            <person name="Maruyama T."/>
        </authorList>
    </citation>
    <scope>NUCLEOTIDE SEQUENCE [LARGE SCALE GENOMIC DNA]</scope>
    <source>
        <strain>HA</strain>
    </source>
</reference>
<keyword id="KW-0413">Isomerase</keyword>
<keyword id="KW-0663">Pyridoxal phosphate</keyword>
<keyword id="KW-1185">Reference proteome</keyword>
<feature type="chain" id="PRO_1000138632" description="Alanine racemase">
    <location>
        <begin position="1"/>
        <end position="351"/>
    </location>
</feature>
<feature type="active site" description="Proton acceptor; specific for D-alanine" evidence="1">
    <location>
        <position position="35"/>
    </location>
</feature>
<feature type="active site" description="Proton acceptor; specific for L-alanine" evidence="1">
    <location>
        <position position="247"/>
    </location>
</feature>
<feature type="binding site" evidence="1">
    <location>
        <position position="127"/>
    </location>
    <ligand>
        <name>substrate</name>
    </ligand>
</feature>
<feature type="binding site" evidence="1">
    <location>
        <position position="295"/>
    </location>
    <ligand>
        <name>substrate</name>
    </ligand>
</feature>
<feature type="modified residue" description="N6-(pyridoxal phosphate)lysine" evidence="1">
    <location>
        <position position="35"/>
    </location>
</feature>
<sequence length="351" mass="38667">MSMCTIVSISQSALKHNLLVVKENSPNSKIVSMVKANAYGHKINLINPIINHSDLLAVSEISEAKKLRKITKKPILLLSGVIEDQELQQAIKLNCQIVVHDKTQITTINNTKQPINIWIKINTGMHRLGLSTHEYFDCIKLLANNPLINTQCVMSHFACADEINHPMNQSQLFEFKKSTYHTTKRSMANSAAILSNPASHFDYVRPGIMLYGVSPFEIINNHLKPVMQISAPIMSIKTIQTGDSVGYGATWIAKKSTTIATIGIGYGDGYPRHAKNGTPVLINNNLCPLIGRVSMDLICVDISNVKASVGDNVILWGAQKLRIETIAKYSDTIAYELLTGISSRVAFVSTI</sequence>
<accession>A5CWE3</accession>
<evidence type="ECO:0000255" key="1">
    <source>
        <dbReference type="HAMAP-Rule" id="MF_01201"/>
    </source>
</evidence>
<organism>
    <name type="scientific">Vesicomyosocius okutanii subsp. Calyptogena okutanii (strain HA)</name>
    <dbReference type="NCBI Taxonomy" id="412965"/>
    <lineage>
        <taxon>Bacteria</taxon>
        <taxon>Pseudomonadati</taxon>
        <taxon>Pseudomonadota</taxon>
        <taxon>Gammaproteobacteria</taxon>
        <taxon>Candidatus Pseudothioglobaceae</taxon>
        <taxon>Candidatus Vesicomyosocius</taxon>
    </lineage>
</organism>
<gene>
    <name type="primary">alr</name>
    <name type="ordered locus">COSY_0613</name>
</gene>
<name>ALR_VESOH</name>
<proteinExistence type="inferred from homology"/>